<geneLocation type="chloroplast"/>
<protein>
    <recommendedName>
        <fullName evidence="1">ATP synthase subunit a, chloroplastic</fullName>
    </recommendedName>
    <alternativeName>
        <fullName evidence="1">ATP synthase F0 sector subunit a</fullName>
    </alternativeName>
    <alternativeName>
        <fullName evidence="1">F-ATPase subunit IV</fullName>
    </alternativeName>
</protein>
<reference key="1">
    <citation type="journal article" date="1993" name="Plant Mol. Biol.">
        <title>Organization of plastid-encoded ATPase genes and flanking regions including homologues of infB and tsf in the thermophilic red alga Galdieria sulphuraria.</title>
        <authorList>
            <person name="Kostrzewa M."/>
            <person name="Zetsche K."/>
        </authorList>
    </citation>
    <scope>NUCLEOTIDE SEQUENCE [GENOMIC DNA]</scope>
    <source>
        <strain>14-1-1 / Isolate 107.79/Goettingen</strain>
    </source>
</reference>
<proteinExistence type="inferred from homology"/>
<sequence length="233" mass="26066">MLISSVKVGEHFYFTLGVFKLHAQVFIVSFFVILILILFSVLGTNKMSQTPRGLQNFLEYVLEFIQDITKSQIGEPHYRDWVPFIGTLFLFIFVSNWSGALIPWKMIILPEGELSAPTNDINTTAALALLTSLAYFYAGISKKGLRYFSRYIKPTPILLPINILEDFTKPLSLSFRLFGNILADELVVSVLTLLVPLIVPLPVMMLGLFASSIQALIFATLAAAYIGEAIEEH</sequence>
<name>ATPI_GALSU</name>
<organism>
    <name type="scientific">Galdieria sulphuraria</name>
    <name type="common">Red alga</name>
    <dbReference type="NCBI Taxonomy" id="130081"/>
    <lineage>
        <taxon>Eukaryota</taxon>
        <taxon>Rhodophyta</taxon>
        <taxon>Bangiophyceae</taxon>
        <taxon>Galdieriales</taxon>
        <taxon>Galdieriaceae</taxon>
        <taxon>Galdieria</taxon>
    </lineage>
</organism>
<dbReference type="EMBL" id="X67814">
    <property type="protein sequence ID" value="CAA48020.1"/>
    <property type="molecule type" value="Genomic_DNA"/>
</dbReference>
<dbReference type="SMR" id="P35008"/>
<dbReference type="eggNOG" id="KOG1071">
    <property type="taxonomic scope" value="Eukaryota"/>
</dbReference>
<dbReference type="eggNOG" id="KOG4665">
    <property type="taxonomic scope" value="Eukaryota"/>
</dbReference>
<dbReference type="GO" id="GO:0009535">
    <property type="term" value="C:chloroplast thylakoid membrane"/>
    <property type="evidence" value="ECO:0007669"/>
    <property type="project" value="UniProtKB-SubCell"/>
</dbReference>
<dbReference type="GO" id="GO:0005886">
    <property type="term" value="C:plasma membrane"/>
    <property type="evidence" value="ECO:0007669"/>
    <property type="project" value="UniProtKB-UniRule"/>
</dbReference>
<dbReference type="GO" id="GO:0045259">
    <property type="term" value="C:proton-transporting ATP synthase complex"/>
    <property type="evidence" value="ECO:0007669"/>
    <property type="project" value="UniProtKB-KW"/>
</dbReference>
<dbReference type="GO" id="GO:0046933">
    <property type="term" value="F:proton-transporting ATP synthase activity, rotational mechanism"/>
    <property type="evidence" value="ECO:0007669"/>
    <property type="project" value="UniProtKB-UniRule"/>
</dbReference>
<dbReference type="CDD" id="cd00310">
    <property type="entry name" value="ATP-synt_Fo_a_6"/>
    <property type="match status" value="1"/>
</dbReference>
<dbReference type="FunFam" id="1.20.120.220:FF:000001">
    <property type="entry name" value="ATP synthase subunit a, chloroplastic"/>
    <property type="match status" value="1"/>
</dbReference>
<dbReference type="Gene3D" id="1.20.120.220">
    <property type="entry name" value="ATP synthase, F0 complex, subunit A"/>
    <property type="match status" value="1"/>
</dbReference>
<dbReference type="HAMAP" id="MF_01393">
    <property type="entry name" value="ATP_synth_a_bact"/>
    <property type="match status" value="1"/>
</dbReference>
<dbReference type="InterPro" id="IPR045082">
    <property type="entry name" value="ATP_syn_F0_a_bact/chloroplast"/>
</dbReference>
<dbReference type="InterPro" id="IPR000568">
    <property type="entry name" value="ATP_synth_F0_asu"/>
</dbReference>
<dbReference type="InterPro" id="IPR023011">
    <property type="entry name" value="ATP_synth_F0_asu_AS"/>
</dbReference>
<dbReference type="InterPro" id="IPR035908">
    <property type="entry name" value="F0_ATP_A_sf"/>
</dbReference>
<dbReference type="NCBIfam" id="TIGR01131">
    <property type="entry name" value="ATP_synt_6_or_A"/>
    <property type="match status" value="1"/>
</dbReference>
<dbReference type="PANTHER" id="PTHR42823">
    <property type="entry name" value="ATP SYNTHASE SUBUNIT A, CHLOROPLASTIC"/>
    <property type="match status" value="1"/>
</dbReference>
<dbReference type="PANTHER" id="PTHR42823:SF3">
    <property type="entry name" value="ATP SYNTHASE SUBUNIT A, CHLOROPLASTIC"/>
    <property type="match status" value="1"/>
</dbReference>
<dbReference type="Pfam" id="PF00119">
    <property type="entry name" value="ATP-synt_A"/>
    <property type="match status" value="1"/>
</dbReference>
<dbReference type="PRINTS" id="PR00123">
    <property type="entry name" value="ATPASEA"/>
</dbReference>
<dbReference type="SUPFAM" id="SSF81336">
    <property type="entry name" value="F1F0 ATP synthase subunit A"/>
    <property type="match status" value="1"/>
</dbReference>
<dbReference type="PROSITE" id="PS00449">
    <property type="entry name" value="ATPASE_A"/>
    <property type="match status" value="1"/>
</dbReference>
<evidence type="ECO:0000255" key="1">
    <source>
        <dbReference type="HAMAP-Rule" id="MF_01393"/>
    </source>
</evidence>
<gene>
    <name evidence="1" type="primary">atpI</name>
</gene>
<comment type="function">
    <text evidence="1">Key component of the proton channel; it plays a direct role in the translocation of protons across the membrane.</text>
</comment>
<comment type="subunit">
    <text evidence="1">F-type ATPases have 2 components, CF(1) - the catalytic core - and CF(0) - the membrane proton channel. CF(1) has five subunits: alpha(3), beta(3), gamma(1), delta(1), epsilon(1). CF(0) has four main subunits: a, b, b' and c.</text>
</comment>
<comment type="subcellular location">
    <subcellularLocation>
        <location evidence="1">Plastid</location>
        <location evidence="1">Chloroplast thylakoid membrane</location>
        <topology evidence="1">Multi-pass membrane protein</topology>
    </subcellularLocation>
</comment>
<comment type="similarity">
    <text evidence="1">Belongs to the ATPase A chain family.</text>
</comment>
<accession>P35008</accession>
<keyword id="KW-0066">ATP synthesis</keyword>
<keyword id="KW-0138">CF(0)</keyword>
<keyword id="KW-0150">Chloroplast</keyword>
<keyword id="KW-0375">Hydrogen ion transport</keyword>
<keyword id="KW-0406">Ion transport</keyword>
<keyword id="KW-0472">Membrane</keyword>
<keyword id="KW-0934">Plastid</keyword>
<keyword id="KW-0793">Thylakoid</keyword>
<keyword id="KW-0812">Transmembrane</keyword>
<keyword id="KW-1133">Transmembrane helix</keyword>
<keyword id="KW-0813">Transport</keyword>
<feature type="chain" id="PRO_0000002584" description="ATP synthase subunit a, chloroplastic">
    <location>
        <begin position="1"/>
        <end position="233"/>
    </location>
</feature>
<feature type="transmembrane region" description="Helical" evidence="1">
    <location>
        <begin position="82"/>
        <end position="102"/>
    </location>
</feature>
<feature type="transmembrane region" description="Helical" evidence="1">
    <location>
        <begin position="121"/>
        <end position="141"/>
    </location>
</feature>
<feature type="transmembrane region" description="Helical" evidence="1">
    <location>
        <begin position="177"/>
        <end position="199"/>
    </location>
</feature>
<feature type="transmembrane region" description="Helical" evidence="1">
    <location>
        <begin position="211"/>
        <end position="231"/>
    </location>
</feature>